<protein>
    <recommendedName>
        <fullName evidence="1">Small ribosomal subunit protein bS18</fullName>
    </recommendedName>
    <alternativeName>
        <fullName evidence="2">30S ribosomal protein S18</fullName>
    </alternativeName>
</protein>
<gene>
    <name evidence="1" type="primary">rpsR</name>
    <name type="ordered locus">ECA3611</name>
</gene>
<dbReference type="EMBL" id="BX950851">
    <property type="protein sequence ID" value="CAG76509.1"/>
    <property type="molecule type" value="Genomic_DNA"/>
</dbReference>
<dbReference type="RefSeq" id="WP_005974788.1">
    <property type="nucleotide sequence ID" value="NC_004547.2"/>
</dbReference>
<dbReference type="SMR" id="Q6D137"/>
<dbReference type="STRING" id="218491.ECA3611"/>
<dbReference type="GeneID" id="93391599"/>
<dbReference type="KEGG" id="eca:ECA3611"/>
<dbReference type="eggNOG" id="COG0238">
    <property type="taxonomic scope" value="Bacteria"/>
</dbReference>
<dbReference type="HOGENOM" id="CLU_148710_2_2_6"/>
<dbReference type="OrthoDB" id="9812008at2"/>
<dbReference type="Proteomes" id="UP000007966">
    <property type="component" value="Chromosome"/>
</dbReference>
<dbReference type="GO" id="GO:0022627">
    <property type="term" value="C:cytosolic small ribosomal subunit"/>
    <property type="evidence" value="ECO:0007669"/>
    <property type="project" value="TreeGrafter"/>
</dbReference>
<dbReference type="GO" id="GO:0070181">
    <property type="term" value="F:small ribosomal subunit rRNA binding"/>
    <property type="evidence" value="ECO:0007669"/>
    <property type="project" value="TreeGrafter"/>
</dbReference>
<dbReference type="GO" id="GO:0003735">
    <property type="term" value="F:structural constituent of ribosome"/>
    <property type="evidence" value="ECO:0007669"/>
    <property type="project" value="InterPro"/>
</dbReference>
<dbReference type="GO" id="GO:0006412">
    <property type="term" value="P:translation"/>
    <property type="evidence" value="ECO:0007669"/>
    <property type="project" value="UniProtKB-UniRule"/>
</dbReference>
<dbReference type="FunFam" id="4.10.640.10:FF:000001">
    <property type="entry name" value="30S ribosomal protein S18"/>
    <property type="match status" value="1"/>
</dbReference>
<dbReference type="Gene3D" id="4.10.640.10">
    <property type="entry name" value="Ribosomal protein S18"/>
    <property type="match status" value="1"/>
</dbReference>
<dbReference type="HAMAP" id="MF_00270">
    <property type="entry name" value="Ribosomal_bS18"/>
    <property type="match status" value="1"/>
</dbReference>
<dbReference type="InterPro" id="IPR001648">
    <property type="entry name" value="Ribosomal_bS18"/>
</dbReference>
<dbReference type="InterPro" id="IPR018275">
    <property type="entry name" value="Ribosomal_bS18_CS"/>
</dbReference>
<dbReference type="InterPro" id="IPR036870">
    <property type="entry name" value="Ribosomal_bS18_sf"/>
</dbReference>
<dbReference type="NCBIfam" id="TIGR00165">
    <property type="entry name" value="S18"/>
    <property type="match status" value="1"/>
</dbReference>
<dbReference type="PANTHER" id="PTHR13479">
    <property type="entry name" value="30S RIBOSOMAL PROTEIN S18"/>
    <property type="match status" value="1"/>
</dbReference>
<dbReference type="PANTHER" id="PTHR13479:SF40">
    <property type="entry name" value="SMALL RIBOSOMAL SUBUNIT PROTEIN BS18M"/>
    <property type="match status" value="1"/>
</dbReference>
<dbReference type="Pfam" id="PF01084">
    <property type="entry name" value="Ribosomal_S18"/>
    <property type="match status" value="1"/>
</dbReference>
<dbReference type="PRINTS" id="PR00974">
    <property type="entry name" value="RIBOSOMALS18"/>
</dbReference>
<dbReference type="SUPFAM" id="SSF46911">
    <property type="entry name" value="Ribosomal protein S18"/>
    <property type="match status" value="1"/>
</dbReference>
<dbReference type="PROSITE" id="PS00057">
    <property type="entry name" value="RIBOSOMAL_S18"/>
    <property type="match status" value="1"/>
</dbReference>
<name>RS18_PECAS</name>
<comment type="function">
    <text evidence="1">Binds as a heterodimer with protein bS6 to the central domain of the 16S rRNA, where it helps stabilize the platform of the 30S subunit.</text>
</comment>
<comment type="subunit">
    <text evidence="1">Part of the 30S ribosomal subunit. Forms a tight heterodimer with protein bS6.</text>
</comment>
<comment type="similarity">
    <text evidence="1">Belongs to the bacterial ribosomal protein bS18 family.</text>
</comment>
<keyword id="KW-1185">Reference proteome</keyword>
<keyword id="KW-0687">Ribonucleoprotein</keyword>
<keyword id="KW-0689">Ribosomal protein</keyword>
<keyword id="KW-0694">RNA-binding</keyword>
<keyword id="KW-0699">rRNA-binding</keyword>
<reference key="1">
    <citation type="journal article" date="2004" name="Proc. Natl. Acad. Sci. U.S.A.">
        <title>Genome sequence of the enterobacterial phytopathogen Erwinia carotovora subsp. atroseptica and characterization of virulence factors.</title>
        <authorList>
            <person name="Bell K.S."/>
            <person name="Sebaihia M."/>
            <person name="Pritchard L."/>
            <person name="Holden M.T.G."/>
            <person name="Hyman L.J."/>
            <person name="Holeva M.C."/>
            <person name="Thomson N.R."/>
            <person name="Bentley S.D."/>
            <person name="Churcher L.J.C."/>
            <person name="Mungall K."/>
            <person name="Atkin R."/>
            <person name="Bason N."/>
            <person name="Brooks K."/>
            <person name="Chillingworth T."/>
            <person name="Clark K."/>
            <person name="Doggett J."/>
            <person name="Fraser A."/>
            <person name="Hance Z."/>
            <person name="Hauser H."/>
            <person name="Jagels K."/>
            <person name="Moule S."/>
            <person name="Norbertczak H."/>
            <person name="Ormond D."/>
            <person name="Price C."/>
            <person name="Quail M.A."/>
            <person name="Sanders M."/>
            <person name="Walker D."/>
            <person name="Whitehead S."/>
            <person name="Salmond G.P.C."/>
            <person name="Birch P.R.J."/>
            <person name="Parkhill J."/>
            <person name="Toth I.K."/>
        </authorList>
    </citation>
    <scope>NUCLEOTIDE SEQUENCE [LARGE SCALE GENOMIC DNA]</scope>
    <source>
        <strain>SCRI 1043 / ATCC BAA-672</strain>
    </source>
</reference>
<feature type="chain" id="PRO_0000111157" description="Small ribosomal subunit protein bS18">
    <location>
        <begin position="1"/>
        <end position="75"/>
    </location>
</feature>
<organism>
    <name type="scientific">Pectobacterium atrosepticum (strain SCRI 1043 / ATCC BAA-672)</name>
    <name type="common">Erwinia carotovora subsp. atroseptica</name>
    <dbReference type="NCBI Taxonomy" id="218491"/>
    <lineage>
        <taxon>Bacteria</taxon>
        <taxon>Pseudomonadati</taxon>
        <taxon>Pseudomonadota</taxon>
        <taxon>Gammaproteobacteria</taxon>
        <taxon>Enterobacterales</taxon>
        <taxon>Pectobacteriaceae</taxon>
        <taxon>Pectobacterium</taxon>
    </lineage>
</organism>
<proteinExistence type="inferred from homology"/>
<evidence type="ECO:0000255" key="1">
    <source>
        <dbReference type="HAMAP-Rule" id="MF_00270"/>
    </source>
</evidence>
<evidence type="ECO:0000305" key="2"/>
<sequence>MARYFRRRKFCRFTAEGVVEIDYKDIATLKNYITESGKIVPSRITGTRAKYQRQLARAIKRARYLSLLPYTDRHQ</sequence>
<accession>Q6D137</accession>